<dbReference type="EC" id="3.4.21.88" evidence="1"/>
<dbReference type="EMBL" id="BA000030">
    <property type="protein sequence ID" value="BAC70174.1"/>
    <property type="status" value="ALT_INIT"/>
    <property type="molecule type" value="Genomic_DNA"/>
</dbReference>
<dbReference type="SMR" id="Q82KE0"/>
<dbReference type="MEROPS" id="S24.001"/>
<dbReference type="KEGG" id="sma:SAVERM_2463"/>
<dbReference type="eggNOG" id="COG1974">
    <property type="taxonomic scope" value="Bacteria"/>
</dbReference>
<dbReference type="HOGENOM" id="CLU_066192_45_0_11"/>
<dbReference type="OrthoDB" id="9802364at2"/>
<dbReference type="Proteomes" id="UP000000428">
    <property type="component" value="Chromosome"/>
</dbReference>
<dbReference type="GO" id="GO:0003677">
    <property type="term" value="F:DNA binding"/>
    <property type="evidence" value="ECO:0007669"/>
    <property type="project" value="UniProtKB-UniRule"/>
</dbReference>
<dbReference type="GO" id="GO:0004252">
    <property type="term" value="F:serine-type endopeptidase activity"/>
    <property type="evidence" value="ECO:0007669"/>
    <property type="project" value="UniProtKB-UniRule"/>
</dbReference>
<dbReference type="GO" id="GO:0006281">
    <property type="term" value="P:DNA repair"/>
    <property type="evidence" value="ECO:0007669"/>
    <property type="project" value="UniProtKB-UniRule"/>
</dbReference>
<dbReference type="GO" id="GO:0006260">
    <property type="term" value="P:DNA replication"/>
    <property type="evidence" value="ECO:0007669"/>
    <property type="project" value="UniProtKB-UniRule"/>
</dbReference>
<dbReference type="GO" id="GO:0045892">
    <property type="term" value="P:negative regulation of DNA-templated transcription"/>
    <property type="evidence" value="ECO:0007669"/>
    <property type="project" value="UniProtKB-UniRule"/>
</dbReference>
<dbReference type="GO" id="GO:0006508">
    <property type="term" value="P:proteolysis"/>
    <property type="evidence" value="ECO:0007669"/>
    <property type="project" value="InterPro"/>
</dbReference>
<dbReference type="GO" id="GO:0009432">
    <property type="term" value="P:SOS response"/>
    <property type="evidence" value="ECO:0007669"/>
    <property type="project" value="UniProtKB-UniRule"/>
</dbReference>
<dbReference type="CDD" id="cd06529">
    <property type="entry name" value="S24_LexA-like"/>
    <property type="match status" value="1"/>
</dbReference>
<dbReference type="FunFam" id="1.10.10.10:FF:000009">
    <property type="entry name" value="LexA repressor"/>
    <property type="match status" value="1"/>
</dbReference>
<dbReference type="FunFam" id="2.10.109.10:FF:000001">
    <property type="entry name" value="LexA repressor"/>
    <property type="match status" value="1"/>
</dbReference>
<dbReference type="Gene3D" id="2.10.109.10">
    <property type="entry name" value="Umud Fragment, subunit A"/>
    <property type="match status" value="1"/>
</dbReference>
<dbReference type="Gene3D" id="1.10.10.10">
    <property type="entry name" value="Winged helix-like DNA-binding domain superfamily/Winged helix DNA-binding domain"/>
    <property type="match status" value="1"/>
</dbReference>
<dbReference type="HAMAP" id="MF_00015">
    <property type="entry name" value="LexA"/>
    <property type="match status" value="1"/>
</dbReference>
<dbReference type="InterPro" id="IPR006200">
    <property type="entry name" value="LexA"/>
</dbReference>
<dbReference type="InterPro" id="IPR039418">
    <property type="entry name" value="LexA-like"/>
</dbReference>
<dbReference type="InterPro" id="IPR036286">
    <property type="entry name" value="LexA/Signal_pep-like_sf"/>
</dbReference>
<dbReference type="InterPro" id="IPR006199">
    <property type="entry name" value="LexA_DNA-bd_dom"/>
</dbReference>
<dbReference type="InterPro" id="IPR050077">
    <property type="entry name" value="LexA_repressor"/>
</dbReference>
<dbReference type="InterPro" id="IPR006197">
    <property type="entry name" value="Peptidase_S24_LexA"/>
</dbReference>
<dbReference type="InterPro" id="IPR015927">
    <property type="entry name" value="Peptidase_S24_S26A/B/C"/>
</dbReference>
<dbReference type="InterPro" id="IPR036388">
    <property type="entry name" value="WH-like_DNA-bd_sf"/>
</dbReference>
<dbReference type="InterPro" id="IPR036390">
    <property type="entry name" value="WH_DNA-bd_sf"/>
</dbReference>
<dbReference type="NCBIfam" id="TIGR00498">
    <property type="entry name" value="lexA"/>
    <property type="match status" value="1"/>
</dbReference>
<dbReference type="PANTHER" id="PTHR33516">
    <property type="entry name" value="LEXA REPRESSOR"/>
    <property type="match status" value="1"/>
</dbReference>
<dbReference type="PANTHER" id="PTHR33516:SF2">
    <property type="entry name" value="LEXA REPRESSOR-RELATED"/>
    <property type="match status" value="1"/>
</dbReference>
<dbReference type="Pfam" id="PF01726">
    <property type="entry name" value="LexA_DNA_bind"/>
    <property type="match status" value="1"/>
</dbReference>
<dbReference type="Pfam" id="PF00717">
    <property type="entry name" value="Peptidase_S24"/>
    <property type="match status" value="1"/>
</dbReference>
<dbReference type="PRINTS" id="PR00726">
    <property type="entry name" value="LEXASERPTASE"/>
</dbReference>
<dbReference type="SUPFAM" id="SSF51306">
    <property type="entry name" value="LexA/Signal peptidase"/>
    <property type="match status" value="1"/>
</dbReference>
<dbReference type="SUPFAM" id="SSF46785">
    <property type="entry name" value="Winged helix' DNA-binding domain"/>
    <property type="match status" value="1"/>
</dbReference>
<sequence>MNEATSHEGPKRSLPGRPPGIRADSSGLTDRQRRVIEVIRDSVQRRGYPPSMREIGQAVGLSSTSSVAHQLMALERKGFLRRDPHRPRAYEVRGSDQSSSVQPTDTAGKPAASYVPLVGRIAAGGPILAEESVEDVFPLPRQLVGDGELFVLKVVGDSMIEAAICDGDWVTVRRQPVAENGDIVAAMLDGEATVKRFKREDGHVWLLPHNSAYQPIPGDEATILGKVVAVLRRV</sequence>
<evidence type="ECO:0000255" key="1">
    <source>
        <dbReference type="HAMAP-Rule" id="MF_00015"/>
    </source>
</evidence>
<evidence type="ECO:0000256" key="2">
    <source>
        <dbReference type="SAM" id="MobiDB-lite"/>
    </source>
</evidence>
<evidence type="ECO:0000305" key="3"/>
<comment type="function">
    <text evidence="1">Represses a number of genes involved in the response to DNA damage (SOS response), including recA and lexA. In the presence of single-stranded DNA, RecA interacts with LexA causing an autocatalytic cleavage which disrupts the DNA-binding part of LexA, leading to derepression of the SOS regulon and eventually DNA repair.</text>
</comment>
<comment type="catalytic activity">
    <reaction evidence="1">
        <text>Hydrolysis of Ala-|-Gly bond in repressor LexA.</text>
        <dbReference type="EC" id="3.4.21.88"/>
    </reaction>
</comment>
<comment type="subunit">
    <text evidence="1">Homodimer.</text>
</comment>
<comment type="similarity">
    <text evidence="1">Belongs to the peptidase S24 family.</text>
</comment>
<comment type="sequence caution" evidence="3">
    <conflict type="erroneous initiation">
        <sequence resource="EMBL-CDS" id="BAC70174"/>
    </conflict>
</comment>
<keyword id="KW-0068">Autocatalytic cleavage</keyword>
<keyword id="KW-0227">DNA damage</keyword>
<keyword id="KW-0234">DNA repair</keyword>
<keyword id="KW-0235">DNA replication</keyword>
<keyword id="KW-0238">DNA-binding</keyword>
<keyword id="KW-0378">Hydrolase</keyword>
<keyword id="KW-1185">Reference proteome</keyword>
<keyword id="KW-0678">Repressor</keyword>
<keyword id="KW-0742">SOS response</keyword>
<keyword id="KW-0804">Transcription</keyword>
<keyword id="KW-0805">Transcription regulation</keyword>
<gene>
    <name evidence="1" type="primary">lexA</name>
    <name type="ordered locus">SAV_2463</name>
</gene>
<reference key="1">
    <citation type="journal article" date="2001" name="Proc. Natl. Acad. Sci. U.S.A.">
        <title>Genome sequence of an industrial microorganism Streptomyces avermitilis: deducing the ability of producing secondary metabolites.</title>
        <authorList>
            <person name="Omura S."/>
            <person name="Ikeda H."/>
            <person name="Ishikawa J."/>
            <person name="Hanamoto A."/>
            <person name="Takahashi C."/>
            <person name="Shinose M."/>
            <person name="Takahashi Y."/>
            <person name="Horikawa H."/>
            <person name="Nakazawa H."/>
            <person name="Osonoe T."/>
            <person name="Kikuchi H."/>
            <person name="Shiba T."/>
            <person name="Sakaki Y."/>
            <person name="Hattori M."/>
        </authorList>
    </citation>
    <scope>NUCLEOTIDE SEQUENCE [LARGE SCALE GENOMIC DNA]</scope>
    <source>
        <strain>ATCC 31267 / DSM 46492 / JCM 5070 / NBRC 14893 / NCIMB 12804 / NRRL 8165 / MA-4680</strain>
    </source>
</reference>
<reference key="2">
    <citation type="journal article" date="2003" name="Nat. Biotechnol.">
        <title>Complete genome sequence and comparative analysis of the industrial microorganism Streptomyces avermitilis.</title>
        <authorList>
            <person name="Ikeda H."/>
            <person name="Ishikawa J."/>
            <person name="Hanamoto A."/>
            <person name="Shinose M."/>
            <person name="Kikuchi H."/>
            <person name="Shiba T."/>
            <person name="Sakaki Y."/>
            <person name="Hattori M."/>
            <person name="Omura S."/>
        </authorList>
    </citation>
    <scope>NUCLEOTIDE SEQUENCE [LARGE SCALE GENOMIC DNA]</scope>
    <source>
        <strain>ATCC 31267 / DSM 46492 / JCM 5070 / NBRC 14893 / NCIMB 12804 / NRRL 8165 / MA-4680</strain>
    </source>
</reference>
<feature type="chain" id="PRO_0000170094" description="LexA repressor">
    <location>
        <begin position="1"/>
        <end position="234"/>
    </location>
</feature>
<feature type="DNA-binding region" description="H-T-H motif" evidence="1">
    <location>
        <begin position="52"/>
        <end position="72"/>
    </location>
</feature>
<feature type="region of interest" description="Disordered" evidence="2">
    <location>
        <begin position="1"/>
        <end position="34"/>
    </location>
</feature>
<feature type="region of interest" description="Disordered" evidence="2">
    <location>
        <begin position="83"/>
        <end position="109"/>
    </location>
</feature>
<feature type="compositionally biased region" description="Basic and acidic residues" evidence="2">
    <location>
        <begin position="1"/>
        <end position="11"/>
    </location>
</feature>
<feature type="compositionally biased region" description="Basic and acidic residues" evidence="2">
    <location>
        <begin position="83"/>
        <end position="94"/>
    </location>
</feature>
<feature type="compositionally biased region" description="Polar residues" evidence="2">
    <location>
        <begin position="95"/>
        <end position="105"/>
    </location>
</feature>
<feature type="active site" description="For autocatalytic cleavage activity" evidence="1">
    <location>
        <position position="158"/>
    </location>
</feature>
<feature type="active site" description="For autocatalytic cleavage activity" evidence="1">
    <location>
        <position position="195"/>
    </location>
</feature>
<feature type="site" description="Cleavage; by autolysis" evidence="1">
    <location>
        <begin position="123"/>
        <end position="124"/>
    </location>
</feature>
<organism>
    <name type="scientific">Streptomyces avermitilis (strain ATCC 31267 / DSM 46492 / JCM 5070 / NBRC 14893 / NCIMB 12804 / NRRL 8165 / MA-4680)</name>
    <dbReference type="NCBI Taxonomy" id="227882"/>
    <lineage>
        <taxon>Bacteria</taxon>
        <taxon>Bacillati</taxon>
        <taxon>Actinomycetota</taxon>
        <taxon>Actinomycetes</taxon>
        <taxon>Kitasatosporales</taxon>
        <taxon>Streptomycetaceae</taxon>
        <taxon>Streptomyces</taxon>
    </lineage>
</organism>
<name>LEXA_STRAW</name>
<protein>
    <recommendedName>
        <fullName evidence="1">LexA repressor</fullName>
        <ecNumber evidence="1">3.4.21.88</ecNumber>
    </recommendedName>
</protein>
<proteinExistence type="inferred from homology"/>
<accession>Q82KE0</accession>